<keyword id="KW-1185">Reference proteome</keyword>
<keyword id="KW-0687">Ribonucleoprotein</keyword>
<keyword id="KW-0689">Ribosomal protein</keyword>
<keyword id="KW-0694">RNA-binding</keyword>
<keyword id="KW-0699">rRNA-binding</keyword>
<gene>
    <name evidence="1" type="primary">rpsT</name>
    <name type="ordered locus">E2348C_0023</name>
</gene>
<sequence length="87" mass="9684">MANIKSAKKRAIQSEKARKHNASRRSMMRTFIKKVYAAIEAGDKAAAQKAFNEMQPIVDRQAAKGLIHKNKAARHKANLTAQINKLA</sequence>
<feature type="chain" id="PRO_1000194244" description="Small ribosomal subunit protein bS20">
    <location>
        <begin position="1"/>
        <end position="87"/>
    </location>
</feature>
<feature type="region of interest" description="Disordered" evidence="2">
    <location>
        <begin position="1"/>
        <end position="26"/>
    </location>
</feature>
<evidence type="ECO:0000255" key="1">
    <source>
        <dbReference type="HAMAP-Rule" id="MF_00500"/>
    </source>
</evidence>
<evidence type="ECO:0000256" key="2">
    <source>
        <dbReference type="SAM" id="MobiDB-lite"/>
    </source>
</evidence>
<evidence type="ECO:0000305" key="3"/>
<dbReference type="EMBL" id="FM180568">
    <property type="protein sequence ID" value="CAS07571.1"/>
    <property type="molecule type" value="Genomic_DNA"/>
</dbReference>
<dbReference type="RefSeq" id="WP_001274021.1">
    <property type="nucleotide sequence ID" value="NC_011601.1"/>
</dbReference>
<dbReference type="SMR" id="B7UI68"/>
<dbReference type="GeneID" id="93777413"/>
<dbReference type="KEGG" id="ecg:E2348C_0023"/>
<dbReference type="HOGENOM" id="CLU_160655_4_0_6"/>
<dbReference type="Proteomes" id="UP000008205">
    <property type="component" value="Chromosome"/>
</dbReference>
<dbReference type="GO" id="GO:0005829">
    <property type="term" value="C:cytosol"/>
    <property type="evidence" value="ECO:0007669"/>
    <property type="project" value="TreeGrafter"/>
</dbReference>
<dbReference type="GO" id="GO:0015935">
    <property type="term" value="C:small ribosomal subunit"/>
    <property type="evidence" value="ECO:0007669"/>
    <property type="project" value="TreeGrafter"/>
</dbReference>
<dbReference type="GO" id="GO:0070181">
    <property type="term" value="F:small ribosomal subunit rRNA binding"/>
    <property type="evidence" value="ECO:0007669"/>
    <property type="project" value="TreeGrafter"/>
</dbReference>
<dbReference type="GO" id="GO:0003735">
    <property type="term" value="F:structural constituent of ribosome"/>
    <property type="evidence" value="ECO:0007669"/>
    <property type="project" value="InterPro"/>
</dbReference>
<dbReference type="GO" id="GO:0006412">
    <property type="term" value="P:translation"/>
    <property type="evidence" value="ECO:0007669"/>
    <property type="project" value="UniProtKB-UniRule"/>
</dbReference>
<dbReference type="FunFam" id="1.20.58.110:FF:000001">
    <property type="entry name" value="30S ribosomal protein S20"/>
    <property type="match status" value="1"/>
</dbReference>
<dbReference type="Gene3D" id="1.20.58.110">
    <property type="entry name" value="Ribosomal protein S20"/>
    <property type="match status" value="1"/>
</dbReference>
<dbReference type="HAMAP" id="MF_00500">
    <property type="entry name" value="Ribosomal_bS20"/>
    <property type="match status" value="1"/>
</dbReference>
<dbReference type="InterPro" id="IPR002583">
    <property type="entry name" value="Ribosomal_bS20"/>
</dbReference>
<dbReference type="InterPro" id="IPR036510">
    <property type="entry name" value="Ribosomal_bS20_sf"/>
</dbReference>
<dbReference type="NCBIfam" id="TIGR00029">
    <property type="entry name" value="S20"/>
    <property type="match status" value="1"/>
</dbReference>
<dbReference type="PANTHER" id="PTHR33398">
    <property type="entry name" value="30S RIBOSOMAL PROTEIN S20"/>
    <property type="match status" value="1"/>
</dbReference>
<dbReference type="PANTHER" id="PTHR33398:SF1">
    <property type="entry name" value="SMALL RIBOSOMAL SUBUNIT PROTEIN BS20C"/>
    <property type="match status" value="1"/>
</dbReference>
<dbReference type="Pfam" id="PF01649">
    <property type="entry name" value="Ribosomal_S20p"/>
    <property type="match status" value="1"/>
</dbReference>
<dbReference type="SUPFAM" id="SSF46992">
    <property type="entry name" value="Ribosomal protein S20"/>
    <property type="match status" value="1"/>
</dbReference>
<accession>B7UI68</accession>
<organism>
    <name type="scientific">Escherichia coli O127:H6 (strain E2348/69 / EPEC)</name>
    <dbReference type="NCBI Taxonomy" id="574521"/>
    <lineage>
        <taxon>Bacteria</taxon>
        <taxon>Pseudomonadati</taxon>
        <taxon>Pseudomonadota</taxon>
        <taxon>Gammaproteobacteria</taxon>
        <taxon>Enterobacterales</taxon>
        <taxon>Enterobacteriaceae</taxon>
        <taxon>Escherichia</taxon>
    </lineage>
</organism>
<reference key="1">
    <citation type="journal article" date="2009" name="J. Bacteriol.">
        <title>Complete genome sequence and comparative genome analysis of enteropathogenic Escherichia coli O127:H6 strain E2348/69.</title>
        <authorList>
            <person name="Iguchi A."/>
            <person name="Thomson N.R."/>
            <person name="Ogura Y."/>
            <person name="Saunders D."/>
            <person name="Ooka T."/>
            <person name="Henderson I.R."/>
            <person name="Harris D."/>
            <person name="Asadulghani M."/>
            <person name="Kurokawa K."/>
            <person name="Dean P."/>
            <person name="Kenny B."/>
            <person name="Quail M.A."/>
            <person name="Thurston S."/>
            <person name="Dougan G."/>
            <person name="Hayashi T."/>
            <person name="Parkhill J."/>
            <person name="Frankel G."/>
        </authorList>
    </citation>
    <scope>NUCLEOTIDE SEQUENCE [LARGE SCALE GENOMIC DNA]</scope>
    <source>
        <strain>E2348/69 / EPEC</strain>
    </source>
</reference>
<protein>
    <recommendedName>
        <fullName evidence="1">Small ribosomal subunit protein bS20</fullName>
    </recommendedName>
    <alternativeName>
        <fullName evidence="3">30S ribosomal protein S20</fullName>
    </alternativeName>
</protein>
<comment type="function">
    <text evidence="1">Binds directly to 16S ribosomal RNA.</text>
</comment>
<comment type="similarity">
    <text evidence="1">Belongs to the bacterial ribosomal protein bS20 family.</text>
</comment>
<name>RS20_ECO27</name>
<proteinExistence type="inferred from homology"/>